<sequence length="85" mass="8746">MFLSLLAITPASVSWTPKVALVMIICNVIAIAIGKATIKYPNEGAKMPSASFFGGMSHGAMLGCTSFGHLLGMGAILGLSTRGVF</sequence>
<gene>
    <name evidence="1" type="primary">psaK</name>
    <name type="ordered locus">SynWH7803_1224</name>
</gene>
<comment type="subcellular location">
    <subcellularLocation>
        <location evidence="1">Cellular thylakoid membrane</location>
        <topology evidence="1">Multi-pass membrane protein</topology>
    </subcellularLocation>
</comment>
<comment type="similarity">
    <text evidence="1">Belongs to the PsaG/PsaK family.</text>
</comment>
<protein>
    <recommendedName>
        <fullName evidence="1">Photosystem I reaction center subunit PsaK</fullName>
    </recommendedName>
    <alternativeName>
        <fullName evidence="1">Photosystem I subunit X</fullName>
    </alternativeName>
</protein>
<reference key="1">
    <citation type="submission" date="2006-05" db="EMBL/GenBank/DDBJ databases">
        <authorList>
            <consortium name="Genoscope"/>
        </authorList>
    </citation>
    <scope>NUCLEOTIDE SEQUENCE [LARGE SCALE GENOMIC DNA]</scope>
    <source>
        <strain>WH7803</strain>
    </source>
</reference>
<keyword id="KW-0472">Membrane</keyword>
<keyword id="KW-0602">Photosynthesis</keyword>
<keyword id="KW-0603">Photosystem I</keyword>
<keyword id="KW-1185">Reference proteome</keyword>
<keyword id="KW-0793">Thylakoid</keyword>
<keyword id="KW-0812">Transmembrane</keyword>
<keyword id="KW-1133">Transmembrane helix</keyword>
<proteinExistence type="inferred from homology"/>
<feature type="chain" id="PRO_1000014035" description="Photosystem I reaction center subunit PsaK">
    <location>
        <begin position="1"/>
        <end position="85"/>
    </location>
</feature>
<feature type="transmembrane region" description="Helical" evidence="1">
    <location>
        <begin position="13"/>
        <end position="33"/>
    </location>
</feature>
<feature type="transmembrane region" description="Helical" evidence="1">
    <location>
        <begin position="59"/>
        <end position="79"/>
    </location>
</feature>
<organism>
    <name type="scientific">Synechococcus sp. (strain WH7803)</name>
    <dbReference type="NCBI Taxonomy" id="32051"/>
    <lineage>
        <taxon>Bacteria</taxon>
        <taxon>Bacillati</taxon>
        <taxon>Cyanobacteriota</taxon>
        <taxon>Cyanophyceae</taxon>
        <taxon>Synechococcales</taxon>
        <taxon>Synechococcaceae</taxon>
        <taxon>Synechococcus</taxon>
    </lineage>
</organism>
<evidence type="ECO:0000255" key="1">
    <source>
        <dbReference type="HAMAP-Rule" id="MF_00474"/>
    </source>
</evidence>
<dbReference type="EMBL" id="CT971583">
    <property type="protein sequence ID" value="CAK23650.1"/>
    <property type="molecule type" value="Genomic_DNA"/>
</dbReference>
<dbReference type="SMR" id="A5GL35"/>
<dbReference type="STRING" id="32051.SynWH7803_1224"/>
<dbReference type="KEGG" id="syx:SynWH7803_1224"/>
<dbReference type="eggNOG" id="ENOG5032YIH">
    <property type="taxonomic scope" value="Bacteria"/>
</dbReference>
<dbReference type="HOGENOM" id="CLU_160496_0_0_3"/>
<dbReference type="OrthoDB" id="561382at2"/>
<dbReference type="Proteomes" id="UP000001566">
    <property type="component" value="Chromosome"/>
</dbReference>
<dbReference type="GO" id="GO:0009522">
    <property type="term" value="C:photosystem I"/>
    <property type="evidence" value="ECO:0007669"/>
    <property type="project" value="UniProtKB-KW"/>
</dbReference>
<dbReference type="GO" id="GO:0031676">
    <property type="term" value="C:plasma membrane-derived thylakoid membrane"/>
    <property type="evidence" value="ECO:0007669"/>
    <property type="project" value="UniProtKB-SubCell"/>
</dbReference>
<dbReference type="GO" id="GO:0015979">
    <property type="term" value="P:photosynthesis"/>
    <property type="evidence" value="ECO:0007669"/>
    <property type="project" value="UniProtKB-UniRule"/>
</dbReference>
<dbReference type="Gene3D" id="1.20.860.20">
    <property type="entry name" value="Photosystem I PsaK, reaction centre"/>
    <property type="match status" value="1"/>
</dbReference>
<dbReference type="HAMAP" id="MF_00474">
    <property type="entry name" value="PSI_PsaK"/>
    <property type="match status" value="1"/>
</dbReference>
<dbReference type="InterPro" id="IPR035982">
    <property type="entry name" value="PSI_centre_PsaK_sf"/>
</dbReference>
<dbReference type="InterPro" id="IPR000549">
    <property type="entry name" value="PSI_PsaG/PsaK"/>
</dbReference>
<dbReference type="InterPro" id="IPR017492">
    <property type="entry name" value="PSI_PsaK"/>
</dbReference>
<dbReference type="InterPro" id="IPR037101">
    <property type="entry name" value="PSI_PsaK_bact"/>
</dbReference>
<dbReference type="NCBIfam" id="TIGR03049">
    <property type="entry name" value="PS_I_psaK"/>
    <property type="match status" value="1"/>
</dbReference>
<dbReference type="Pfam" id="PF01241">
    <property type="entry name" value="PSI_PSAK"/>
    <property type="match status" value="1"/>
</dbReference>
<dbReference type="SUPFAM" id="SSF81563">
    <property type="entry name" value="Photosystem I reaction center subunit X, PsaK"/>
    <property type="match status" value="1"/>
</dbReference>
<dbReference type="PROSITE" id="PS01026">
    <property type="entry name" value="PHOTOSYSTEM_I_PSAGK"/>
    <property type="match status" value="1"/>
</dbReference>
<name>PSAK_SYNPW</name>
<accession>A5GL35</accession>